<dbReference type="EC" id="2.7.4.25" evidence="1"/>
<dbReference type="EMBL" id="AP006618">
    <property type="protein sequence ID" value="BAD56858.1"/>
    <property type="status" value="ALT_INIT"/>
    <property type="molecule type" value="Genomic_DNA"/>
</dbReference>
<dbReference type="RefSeq" id="WP_041560856.1">
    <property type="nucleotide sequence ID" value="NC_006361.1"/>
</dbReference>
<dbReference type="SMR" id="Q5YY83"/>
<dbReference type="STRING" id="247156.NFA_20120"/>
<dbReference type="GeneID" id="61132791"/>
<dbReference type="KEGG" id="nfa:NFA_20120"/>
<dbReference type="eggNOG" id="COG0283">
    <property type="taxonomic scope" value="Bacteria"/>
</dbReference>
<dbReference type="HOGENOM" id="CLU_079959_0_0_11"/>
<dbReference type="OrthoDB" id="9807434at2"/>
<dbReference type="Proteomes" id="UP000006820">
    <property type="component" value="Chromosome"/>
</dbReference>
<dbReference type="GO" id="GO:0005829">
    <property type="term" value="C:cytosol"/>
    <property type="evidence" value="ECO:0007669"/>
    <property type="project" value="TreeGrafter"/>
</dbReference>
<dbReference type="GO" id="GO:0005524">
    <property type="term" value="F:ATP binding"/>
    <property type="evidence" value="ECO:0007669"/>
    <property type="project" value="UniProtKB-UniRule"/>
</dbReference>
<dbReference type="GO" id="GO:0036430">
    <property type="term" value="F:CMP kinase activity"/>
    <property type="evidence" value="ECO:0007669"/>
    <property type="project" value="RHEA"/>
</dbReference>
<dbReference type="GO" id="GO:0036431">
    <property type="term" value="F:dCMP kinase activity"/>
    <property type="evidence" value="ECO:0007669"/>
    <property type="project" value="RHEA"/>
</dbReference>
<dbReference type="GO" id="GO:0015949">
    <property type="term" value="P:nucleobase-containing small molecule interconversion"/>
    <property type="evidence" value="ECO:0007669"/>
    <property type="project" value="TreeGrafter"/>
</dbReference>
<dbReference type="GO" id="GO:0006220">
    <property type="term" value="P:pyrimidine nucleotide metabolic process"/>
    <property type="evidence" value="ECO:0007669"/>
    <property type="project" value="UniProtKB-UniRule"/>
</dbReference>
<dbReference type="CDD" id="cd02020">
    <property type="entry name" value="CMPK"/>
    <property type="match status" value="1"/>
</dbReference>
<dbReference type="Gene3D" id="3.40.50.300">
    <property type="entry name" value="P-loop containing nucleotide triphosphate hydrolases"/>
    <property type="match status" value="1"/>
</dbReference>
<dbReference type="HAMAP" id="MF_00238">
    <property type="entry name" value="Cytidyl_kinase_type1"/>
    <property type="match status" value="1"/>
</dbReference>
<dbReference type="InterPro" id="IPR003136">
    <property type="entry name" value="Cytidylate_kin"/>
</dbReference>
<dbReference type="InterPro" id="IPR011994">
    <property type="entry name" value="Cytidylate_kinase_dom"/>
</dbReference>
<dbReference type="InterPro" id="IPR027417">
    <property type="entry name" value="P-loop_NTPase"/>
</dbReference>
<dbReference type="NCBIfam" id="TIGR00017">
    <property type="entry name" value="cmk"/>
    <property type="match status" value="1"/>
</dbReference>
<dbReference type="PANTHER" id="PTHR21299:SF2">
    <property type="entry name" value="CYTIDYLATE KINASE"/>
    <property type="match status" value="1"/>
</dbReference>
<dbReference type="PANTHER" id="PTHR21299">
    <property type="entry name" value="CYTIDYLATE KINASE/PANTOATE-BETA-ALANINE LIGASE"/>
    <property type="match status" value="1"/>
</dbReference>
<dbReference type="Pfam" id="PF02224">
    <property type="entry name" value="Cytidylate_kin"/>
    <property type="match status" value="1"/>
</dbReference>
<dbReference type="SUPFAM" id="SSF52540">
    <property type="entry name" value="P-loop containing nucleoside triphosphate hydrolases"/>
    <property type="match status" value="1"/>
</dbReference>
<sequence length="232" mass="24549">MSEDTPLVVAMDGPSGTGKSSVSRRLATRLGARYLDTGAMYRVATLRVLRAGVELTDPAAIAAAVKELPLTIGTDPSREVIELDGEDVSAEIRGDAVTKAVSAVSAVPEVRDLLVAAQRDIAADARRIVVEGRDIGTVVLPAADAKIYLTASAEARAERRNQQNIREGRGDDYAAVLADVQRRDTLDSTRAVSPLRPAADAVLVDTSELTMDEVIDELSRVVAQQISTGSAQ</sequence>
<keyword id="KW-0067">ATP-binding</keyword>
<keyword id="KW-0963">Cytoplasm</keyword>
<keyword id="KW-0418">Kinase</keyword>
<keyword id="KW-0547">Nucleotide-binding</keyword>
<keyword id="KW-1185">Reference proteome</keyword>
<keyword id="KW-0808">Transferase</keyword>
<name>KCY_NOCFA</name>
<accession>Q5YY83</accession>
<gene>
    <name evidence="1" type="primary">cmk</name>
    <name type="ordered locus">NFA_20120</name>
</gene>
<feature type="chain" id="PRO_0000131947" description="Cytidylate kinase">
    <location>
        <begin position="1"/>
        <end position="232"/>
    </location>
</feature>
<feature type="region of interest" description="Disordered" evidence="2">
    <location>
        <begin position="1"/>
        <end position="21"/>
    </location>
</feature>
<feature type="binding site" evidence="1">
    <location>
        <begin position="13"/>
        <end position="21"/>
    </location>
    <ligand>
        <name>ATP</name>
        <dbReference type="ChEBI" id="CHEBI:30616"/>
    </ligand>
</feature>
<protein>
    <recommendedName>
        <fullName evidence="1">Cytidylate kinase</fullName>
        <shortName evidence="1">CK</shortName>
        <ecNumber evidence="1">2.7.4.25</ecNumber>
    </recommendedName>
    <alternativeName>
        <fullName evidence="1">Cytidine monophosphate kinase</fullName>
        <shortName evidence="1">CMP kinase</shortName>
    </alternativeName>
</protein>
<evidence type="ECO:0000255" key="1">
    <source>
        <dbReference type="HAMAP-Rule" id="MF_00238"/>
    </source>
</evidence>
<evidence type="ECO:0000256" key="2">
    <source>
        <dbReference type="SAM" id="MobiDB-lite"/>
    </source>
</evidence>
<evidence type="ECO:0000305" key="3"/>
<proteinExistence type="inferred from homology"/>
<reference key="1">
    <citation type="journal article" date="2004" name="Proc. Natl. Acad. Sci. U.S.A.">
        <title>The complete genomic sequence of Nocardia farcinica IFM 10152.</title>
        <authorList>
            <person name="Ishikawa J."/>
            <person name="Yamashita A."/>
            <person name="Mikami Y."/>
            <person name="Hoshino Y."/>
            <person name="Kurita H."/>
            <person name="Hotta K."/>
            <person name="Shiba T."/>
            <person name="Hattori M."/>
        </authorList>
    </citation>
    <scope>NUCLEOTIDE SEQUENCE [LARGE SCALE GENOMIC DNA]</scope>
    <source>
        <strain>IFM 10152</strain>
    </source>
</reference>
<comment type="catalytic activity">
    <reaction evidence="1">
        <text>CMP + ATP = CDP + ADP</text>
        <dbReference type="Rhea" id="RHEA:11600"/>
        <dbReference type="ChEBI" id="CHEBI:30616"/>
        <dbReference type="ChEBI" id="CHEBI:58069"/>
        <dbReference type="ChEBI" id="CHEBI:60377"/>
        <dbReference type="ChEBI" id="CHEBI:456216"/>
        <dbReference type="EC" id="2.7.4.25"/>
    </reaction>
</comment>
<comment type="catalytic activity">
    <reaction evidence="1">
        <text>dCMP + ATP = dCDP + ADP</text>
        <dbReference type="Rhea" id="RHEA:25094"/>
        <dbReference type="ChEBI" id="CHEBI:30616"/>
        <dbReference type="ChEBI" id="CHEBI:57566"/>
        <dbReference type="ChEBI" id="CHEBI:58593"/>
        <dbReference type="ChEBI" id="CHEBI:456216"/>
        <dbReference type="EC" id="2.7.4.25"/>
    </reaction>
</comment>
<comment type="subcellular location">
    <subcellularLocation>
        <location evidence="1">Cytoplasm</location>
    </subcellularLocation>
</comment>
<comment type="similarity">
    <text evidence="1">Belongs to the cytidylate kinase family. Type 1 subfamily.</text>
</comment>
<comment type="sequence caution" evidence="3">
    <conflict type="erroneous initiation">
        <sequence resource="EMBL-CDS" id="BAD56858"/>
    </conflict>
</comment>
<organism>
    <name type="scientific">Nocardia farcinica (strain IFM 10152)</name>
    <dbReference type="NCBI Taxonomy" id="247156"/>
    <lineage>
        <taxon>Bacteria</taxon>
        <taxon>Bacillati</taxon>
        <taxon>Actinomycetota</taxon>
        <taxon>Actinomycetes</taxon>
        <taxon>Mycobacteriales</taxon>
        <taxon>Nocardiaceae</taxon>
        <taxon>Nocardia</taxon>
    </lineage>
</organism>